<dbReference type="EMBL" id="CP001022">
    <property type="protein sequence ID" value="ACB59594.1"/>
    <property type="molecule type" value="Genomic_DNA"/>
</dbReference>
<dbReference type="RefSeq" id="WP_012369020.1">
    <property type="nucleotide sequence ID" value="NC_010556.1"/>
</dbReference>
<dbReference type="SMR" id="B1YGW1"/>
<dbReference type="STRING" id="262543.Exig_0107"/>
<dbReference type="GeneID" id="90838847"/>
<dbReference type="KEGG" id="esi:Exig_0107"/>
<dbReference type="eggNOG" id="COG0198">
    <property type="taxonomic scope" value="Bacteria"/>
</dbReference>
<dbReference type="HOGENOM" id="CLU_093315_2_0_9"/>
<dbReference type="OrthoDB" id="9807419at2"/>
<dbReference type="Proteomes" id="UP000001681">
    <property type="component" value="Chromosome"/>
</dbReference>
<dbReference type="GO" id="GO:1990904">
    <property type="term" value="C:ribonucleoprotein complex"/>
    <property type="evidence" value="ECO:0007669"/>
    <property type="project" value="UniProtKB-KW"/>
</dbReference>
<dbReference type="GO" id="GO:0005840">
    <property type="term" value="C:ribosome"/>
    <property type="evidence" value="ECO:0007669"/>
    <property type="project" value="UniProtKB-KW"/>
</dbReference>
<dbReference type="GO" id="GO:0019843">
    <property type="term" value="F:rRNA binding"/>
    <property type="evidence" value="ECO:0007669"/>
    <property type="project" value="UniProtKB-UniRule"/>
</dbReference>
<dbReference type="GO" id="GO:0003735">
    <property type="term" value="F:structural constituent of ribosome"/>
    <property type="evidence" value="ECO:0007669"/>
    <property type="project" value="InterPro"/>
</dbReference>
<dbReference type="GO" id="GO:0006412">
    <property type="term" value="P:translation"/>
    <property type="evidence" value="ECO:0007669"/>
    <property type="project" value="UniProtKB-UniRule"/>
</dbReference>
<dbReference type="CDD" id="cd06089">
    <property type="entry name" value="KOW_RPL26"/>
    <property type="match status" value="1"/>
</dbReference>
<dbReference type="FunFam" id="2.30.30.30:FF:000004">
    <property type="entry name" value="50S ribosomal protein L24"/>
    <property type="match status" value="1"/>
</dbReference>
<dbReference type="Gene3D" id="2.30.30.30">
    <property type="match status" value="1"/>
</dbReference>
<dbReference type="HAMAP" id="MF_01326_B">
    <property type="entry name" value="Ribosomal_uL24_B"/>
    <property type="match status" value="1"/>
</dbReference>
<dbReference type="InterPro" id="IPR005824">
    <property type="entry name" value="KOW"/>
</dbReference>
<dbReference type="InterPro" id="IPR014722">
    <property type="entry name" value="Rib_uL2_dom2"/>
</dbReference>
<dbReference type="InterPro" id="IPR003256">
    <property type="entry name" value="Ribosomal_uL24"/>
</dbReference>
<dbReference type="InterPro" id="IPR005825">
    <property type="entry name" value="Ribosomal_uL24_CS"/>
</dbReference>
<dbReference type="InterPro" id="IPR041988">
    <property type="entry name" value="Ribosomal_uL24_KOW"/>
</dbReference>
<dbReference type="InterPro" id="IPR008991">
    <property type="entry name" value="Translation_prot_SH3-like_sf"/>
</dbReference>
<dbReference type="NCBIfam" id="TIGR01079">
    <property type="entry name" value="rplX_bact"/>
    <property type="match status" value="1"/>
</dbReference>
<dbReference type="PANTHER" id="PTHR12903">
    <property type="entry name" value="MITOCHONDRIAL RIBOSOMAL PROTEIN L24"/>
    <property type="match status" value="1"/>
</dbReference>
<dbReference type="Pfam" id="PF00467">
    <property type="entry name" value="KOW"/>
    <property type="match status" value="1"/>
</dbReference>
<dbReference type="Pfam" id="PF17136">
    <property type="entry name" value="ribosomal_L24"/>
    <property type="match status" value="1"/>
</dbReference>
<dbReference type="SMART" id="SM00739">
    <property type="entry name" value="KOW"/>
    <property type="match status" value="1"/>
</dbReference>
<dbReference type="SUPFAM" id="SSF50104">
    <property type="entry name" value="Translation proteins SH3-like domain"/>
    <property type="match status" value="1"/>
</dbReference>
<dbReference type="PROSITE" id="PS01108">
    <property type="entry name" value="RIBOSOMAL_L24"/>
    <property type="match status" value="1"/>
</dbReference>
<organism>
    <name type="scientific">Exiguobacterium sibiricum (strain DSM 17290 / CCUG 55495 / CIP 109462 / JCM 13490 / 255-15)</name>
    <dbReference type="NCBI Taxonomy" id="262543"/>
    <lineage>
        <taxon>Bacteria</taxon>
        <taxon>Bacillati</taxon>
        <taxon>Bacillota</taxon>
        <taxon>Bacilli</taxon>
        <taxon>Bacillales</taxon>
        <taxon>Bacillales Family XII. Incertae Sedis</taxon>
        <taxon>Exiguobacterium</taxon>
    </lineage>
</organism>
<comment type="function">
    <text evidence="1">One of two assembly initiator proteins, it binds directly to the 5'-end of the 23S rRNA, where it nucleates assembly of the 50S subunit.</text>
</comment>
<comment type="function">
    <text evidence="1">One of the proteins that surrounds the polypeptide exit tunnel on the outside of the subunit.</text>
</comment>
<comment type="subunit">
    <text evidence="1">Part of the 50S ribosomal subunit.</text>
</comment>
<comment type="similarity">
    <text evidence="1">Belongs to the universal ribosomal protein uL24 family.</text>
</comment>
<reference key="1">
    <citation type="submission" date="2008-04" db="EMBL/GenBank/DDBJ databases">
        <title>Complete sequence of chromosome of Exiguobacterium sibiricum 255-15.</title>
        <authorList>
            <consortium name="US DOE Joint Genome Institute"/>
            <person name="Copeland A."/>
            <person name="Lucas S."/>
            <person name="Lapidus A."/>
            <person name="Glavina del Rio T."/>
            <person name="Dalin E."/>
            <person name="Tice H."/>
            <person name="Bruce D."/>
            <person name="Goodwin L."/>
            <person name="Pitluck S."/>
            <person name="Kiss H."/>
            <person name="Chertkov O."/>
            <person name="Monk C."/>
            <person name="Brettin T."/>
            <person name="Detter J.C."/>
            <person name="Han C."/>
            <person name="Kuske C.R."/>
            <person name="Schmutz J."/>
            <person name="Larimer F."/>
            <person name="Land M."/>
            <person name="Hauser L."/>
            <person name="Kyrpides N."/>
            <person name="Mikhailova N."/>
            <person name="Vishnivetskaya T."/>
            <person name="Rodrigues D.F."/>
            <person name="Gilichinsky D."/>
            <person name="Tiedje J."/>
            <person name="Richardson P."/>
        </authorList>
    </citation>
    <scope>NUCLEOTIDE SEQUENCE [LARGE SCALE GENOMIC DNA]</scope>
    <source>
        <strain>DSM 17290 / CCUG 55495 / CIP 109462 / JCM 13490 / 255-15</strain>
    </source>
</reference>
<evidence type="ECO:0000255" key="1">
    <source>
        <dbReference type="HAMAP-Rule" id="MF_01326"/>
    </source>
</evidence>
<evidence type="ECO:0000305" key="2"/>
<feature type="chain" id="PRO_1000141999" description="Large ribosomal subunit protein uL24">
    <location>
        <begin position="1"/>
        <end position="103"/>
    </location>
</feature>
<sequence>MHVKKGDKVQVMTGKDKGKQGVVLTAMPKKDRVIVEGVNMIKKHSKPSQLNPQGGIVEKEAPIHVSNVMLIDPKTGNPTRVGFTVVDGKKVRIAKKSGEALDK</sequence>
<gene>
    <name evidence="1" type="primary">rplX</name>
    <name type="ordered locus">Exig_0107</name>
</gene>
<keyword id="KW-1185">Reference proteome</keyword>
<keyword id="KW-0687">Ribonucleoprotein</keyword>
<keyword id="KW-0689">Ribosomal protein</keyword>
<keyword id="KW-0694">RNA-binding</keyword>
<keyword id="KW-0699">rRNA-binding</keyword>
<accession>B1YGW1</accession>
<protein>
    <recommendedName>
        <fullName evidence="1">Large ribosomal subunit protein uL24</fullName>
    </recommendedName>
    <alternativeName>
        <fullName evidence="2">50S ribosomal protein L24</fullName>
    </alternativeName>
</protein>
<name>RL24_EXIS2</name>
<proteinExistence type="inferred from homology"/>